<comment type="function">
    <text evidence="3">Catalyzes the reversible oxidation of malate to oxaloacetate.</text>
</comment>
<comment type="catalytic activity">
    <reaction evidence="3">
        <text>(S)-malate + NADP(+) = oxaloacetate + NADPH + H(+)</text>
        <dbReference type="Rhea" id="RHEA:10824"/>
        <dbReference type="ChEBI" id="CHEBI:15378"/>
        <dbReference type="ChEBI" id="CHEBI:15589"/>
        <dbReference type="ChEBI" id="CHEBI:16452"/>
        <dbReference type="ChEBI" id="CHEBI:57783"/>
        <dbReference type="ChEBI" id="CHEBI:58349"/>
        <dbReference type="EC" id="1.1.1.299"/>
    </reaction>
</comment>
<comment type="catalytic activity">
    <reaction evidence="3">
        <text>(S)-malate + NAD(+) = oxaloacetate + NADH + H(+)</text>
        <dbReference type="Rhea" id="RHEA:21432"/>
        <dbReference type="ChEBI" id="CHEBI:15378"/>
        <dbReference type="ChEBI" id="CHEBI:15589"/>
        <dbReference type="ChEBI" id="CHEBI:16452"/>
        <dbReference type="ChEBI" id="CHEBI:57540"/>
        <dbReference type="ChEBI" id="CHEBI:57945"/>
        <dbReference type="EC" id="1.1.1.299"/>
    </reaction>
</comment>
<comment type="similarity">
    <text evidence="4">Belongs to the LDH/MDH superfamily.</text>
</comment>
<evidence type="ECO:0000250" key="1">
    <source>
        <dbReference type="UniProtKB" id="P61889"/>
    </source>
</evidence>
<evidence type="ECO:0000250" key="2">
    <source>
        <dbReference type="UniProtKB" id="Q60176"/>
    </source>
</evidence>
<evidence type="ECO:0000250" key="3">
    <source>
        <dbReference type="UniProtKB" id="Q9YEA1"/>
    </source>
</evidence>
<evidence type="ECO:0000305" key="4"/>
<dbReference type="EC" id="1.1.1.299" evidence="3"/>
<dbReference type="EMBL" id="BX950229">
    <property type="protein sequence ID" value="CAF30201.1"/>
    <property type="molecule type" value="Genomic_DNA"/>
</dbReference>
<dbReference type="RefSeq" id="WP_011170589.1">
    <property type="nucleotide sequence ID" value="NC_005791.1"/>
</dbReference>
<dbReference type="SMR" id="Q6LZI3"/>
<dbReference type="STRING" id="267377.MMP0645"/>
<dbReference type="EnsemblBacteria" id="CAF30201">
    <property type="protein sequence ID" value="CAF30201"/>
    <property type="gene ID" value="MMP0645"/>
</dbReference>
<dbReference type="GeneID" id="37875176"/>
<dbReference type="KEGG" id="mmp:MMP0645"/>
<dbReference type="PATRIC" id="fig|267377.15.peg.662"/>
<dbReference type="eggNOG" id="arCOG00246">
    <property type="taxonomic scope" value="Archaea"/>
</dbReference>
<dbReference type="HOGENOM" id="CLU_045401_2_2_2"/>
<dbReference type="OrthoDB" id="2596at2157"/>
<dbReference type="Proteomes" id="UP000000590">
    <property type="component" value="Chromosome"/>
</dbReference>
<dbReference type="GO" id="GO:0004459">
    <property type="term" value="F:L-lactate dehydrogenase activity"/>
    <property type="evidence" value="ECO:0007669"/>
    <property type="project" value="InterPro"/>
</dbReference>
<dbReference type="GO" id="GO:0030060">
    <property type="term" value="F:L-malate dehydrogenase (NAD+) activity"/>
    <property type="evidence" value="ECO:0007669"/>
    <property type="project" value="RHEA"/>
</dbReference>
<dbReference type="GO" id="GO:0046554">
    <property type="term" value="F:L-malate dehydrogenase (NADP+) activity"/>
    <property type="evidence" value="ECO:0007669"/>
    <property type="project" value="RHEA"/>
</dbReference>
<dbReference type="GO" id="GO:0006089">
    <property type="term" value="P:lactate metabolic process"/>
    <property type="evidence" value="ECO:0007669"/>
    <property type="project" value="TreeGrafter"/>
</dbReference>
<dbReference type="GO" id="GO:0006099">
    <property type="term" value="P:tricarboxylic acid cycle"/>
    <property type="evidence" value="ECO:0007669"/>
    <property type="project" value="UniProtKB-KW"/>
</dbReference>
<dbReference type="CDD" id="cd05294">
    <property type="entry name" value="LDH-like_MDH_nadp"/>
    <property type="match status" value="1"/>
</dbReference>
<dbReference type="Gene3D" id="3.90.110.10">
    <property type="entry name" value="Lactate dehydrogenase/glycoside hydrolase, family 4, C-terminal"/>
    <property type="match status" value="1"/>
</dbReference>
<dbReference type="Gene3D" id="3.40.50.720">
    <property type="entry name" value="NAD(P)-binding Rossmann-like Domain"/>
    <property type="match status" value="1"/>
</dbReference>
<dbReference type="InterPro" id="IPR001557">
    <property type="entry name" value="L-lactate/malate_DH"/>
</dbReference>
<dbReference type="InterPro" id="IPR018177">
    <property type="entry name" value="L-lactate_DH_AS"/>
</dbReference>
<dbReference type="InterPro" id="IPR022383">
    <property type="entry name" value="Lactate/malate_DH_C"/>
</dbReference>
<dbReference type="InterPro" id="IPR001236">
    <property type="entry name" value="Lactate/malate_DH_N"/>
</dbReference>
<dbReference type="InterPro" id="IPR015955">
    <property type="entry name" value="Lactate_DH/Glyco_Ohase_4_C"/>
</dbReference>
<dbReference type="InterPro" id="IPR036291">
    <property type="entry name" value="NAD(P)-bd_dom_sf"/>
</dbReference>
<dbReference type="NCBIfam" id="NF004863">
    <property type="entry name" value="PRK06223.1"/>
    <property type="match status" value="1"/>
</dbReference>
<dbReference type="PANTHER" id="PTHR43128">
    <property type="entry name" value="L-2-HYDROXYCARBOXYLATE DEHYDROGENASE (NAD(P)(+))"/>
    <property type="match status" value="1"/>
</dbReference>
<dbReference type="PANTHER" id="PTHR43128:SF16">
    <property type="entry name" value="L-LACTATE DEHYDROGENASE"/>
    <property type="match status" value="1"/>
</dbReference>
<dbReference type="Pfam" id="PF02866">
    <property type="entry name" value="Ldh_1_C"/>
    <property type="match status" value="1"/>
</dbReference>
<dbReference type="Pfam" id="PF00056">
    <property type="entry name" value="Ldh_1_N"/>
    <property type="match status" value="1"/>
</dbReference>
<dbReference type="PIRSF" id="PIRSF000102">
    <property type="entry name" value="Lac_mal_DH"/>
    <property type="match status" value="1"/>
</dbReference>
<dbReference type="PRINTS" id="PR00086">
    <property type="entry name" value="LLDHDRGNASE"/>
</dbReference>
<dbReference type="SUPFAM" id="SSF56327">
    <property type="entry name" value="LDH C-terminal domain-like"/>
    <property type="match status" value="1"/>
</dbReference>
<dbReference type="SUPFAM" id="SSF51735">
    <property type="entry name" value="NAD(P)-binding Rossmann-fold domains"/>
    <property type="match status" value="1"/>
</dbReference>
<gene>
    <name type="primary">mdh</name>
    <name type="ordered locus">MMP0645</name>
</gene>
<sequence>MDVSIIGASGKIGSVLSLLLAKESHIKNINLIARSSSINKLKGLKMDLYDAMAAAGQDTDIDICCDDDLSCTANSDITIITAGMARTGEMSRIDLMKGNAKIVKNYVKNIANFGDTKIFMISNPVDLMTYKALIESGYEKNQVFGLGTHLDSMRFKVAVAKHFEVHLDDVRTRIVGEHGDSMVPVISATAVGGIPIKRLPKYEDFPYEKILERIKGYGQEIINLKNGSEYGPASAIVNIVRCIAHDEKRLLTLSTYIEDEIEGIEGGCCIGVPVKVGKNGIEEVIHIKMEDDEIEGFKKSFELVKGYCRQIESI</sequence>
<protein>
    <recommendedName>
        <fullName evidence="3">Malate dehydrogenase</fullName>
        <ecNumber evidence="3">1.1.1.299</ecNumber>
    </recommendedName>
</protein>
<proteinExistence type="inferred from homology"/>
<reference key="1">
    <citation type="journal article" date="2004" name="J. Bacteriol.">
        <title>Complete genome sequence of the genetically tractable hydrogenotrophic methanogen Methanococcus maripaludis.</title>
        <authorList>
            <person name="Hendrickson E.L."/>
            <person name="Kaul R."/>
            <person name="Zhou Y."/>
            <person name="Bovee D."/>
            <person name="Chapman P."/>
            <person name="Chung J."/>
            <person name="Conway de Macario E."/>
            <person name="Dodsworth J.A."/>
            <person name="Gillett W."/>
            <person name="Graham D.E."/>
            <person name="Hackett M."/>
            <person name="Haydock A.K."/>
            <person name="Kang A."/>
            <person name="Land M.L."/>
            <person name="Levy R."/>
            <person name="Lie T.J."/>
            <person name="Major T.A."/>
            <person name="Moore B.C."/>
            <person name="Porat I."/>
            <person name="Palmeiri A."/>
            <person name="Rouse G."/>
            <person name="Saenphimmachak C."/>
            <person name="Soell D."/>
            <person name="Van Dien S."/>
            <person name="Wang T."/>
            <person name="Whitman W.B."/>
            <person name="Xia Q."/>
            <person name="Zhang Y."/>
            <person name="Larimer F.W."/>
            <person name="Olson M.V."/>
            <person name="Leigh J.A."/>
        </authorList>
    </citation>
    <scope>NUCLEOTIDE SEQUENCE [LARGE SCALE GENOMIC DNA]</scope>
    <source>
        <strain>DSM 14266 / JCM 13030 / NBRC 101832 / S2 / LL</strain>
    </source>
</reference>
<keyword id="KW-0520">NAD</keyword>
<keyword id="KW-0521">NADP</keyword>
<keyword id="KW-0560">Oxidoreductase</keyword>
<keyword id="KW-1185">Reference proteome</keyword>
<keyword id="KW-0816">Tricarboxylic acid cycle</keyword>
<accession>Q6LZI3</accession>
<feature type="chain" id="PRO_0000113488" description="Malate dehydrogenase">
    <location>
        <begin position="1"/>
        <end position="314"/>
    </location>
</feature>
<feature type="active site" description="Proton acceptor" evidence="1">
    <location>
        <position position="178"/>
    </location>
</feature>
<feature type="binding site" evidence="2">
    <location>
        <begin position="7"/>
        <end position="13"/>
    </location>
    <ligand>
        <name>NADP(+)</name>
        <dbReference type="ChEBI" id="CHEBI:58349"/>
    </ligand>
</feature>
<feature type="binding site" evidence="1">
    <location>
        <position position="86"/>
    </location>
    <ligand>
        <name>substrate</name>
    </ligand>
</feature>
<feature type="binding site" evidence="1">
    <location>
        <position position="92"/>
    </location>
    <ligand>
        <name>substrate</name>
    </ligand>
</feature>
<feature type="binding site" evidence="2">
    <location>
        <position position="99"/>
    </location>
    <ligand>
        <name>NADP(+)</name>
        <dbReference type="ChEBI" id="CHEBI:58349"/>
    </ligand>
</feature>
<feature type="binding site" evidence="2">
    <location>
        <begin position="121"/>
        <end position="123"/>
    </location>
    <ligand>
        <name>NADP(+)</name>
        <dbReference type="ChEBI" id="CHEBI:58349"/>
    </ligand>
</feature>
<feature type="binding site" evidence="1">
    <location>
        <position position="123"/>
    </location>
    <ligand>
        <name>substrate</name>
    </ligand>
</feature>
<feature type="binding site" evidence="1">
    <location>
        <position position="154"/>
    </location>
    <ligand>
        <name>substrate</name>
    </ligand>
</feature>
<organism>
    <name type="scientific">Methanococcus maripaludis (strain DSM 14266 / JCM 13030 / NBRC 101832 / S2 / LL)</name>
    <dbReference type="NCBI Taxonomy" id="267377"/>
    <lineage>
        <taxon>Archaea</taxon>
        <taxon>Methanobacteriati</taxon>
        <taxon>Methanobacteriota</taxon>
        <taxon>Methanomada group</taxon>
        <taxon>Methanococci</taxon>
        <taxon>Methanococcales</taxon>
        <taxon>Methanococcaceae</taxon>
        <taxon>Methanococcus</taxon>
    </lineage>
</organism>
<name>MDH_METMP</name>